<feature type="chain" id="PRO_0000208829" description="Elongation factor 1-gamma">
    <location>
        <begin position="1"/>
        <end position="422"/>
    </location>
</feature>
<feature type="domain" description="GST N-terminal">
    <location>
        <begin position="1"/>
        <end position="82"/>
    </location>
</feature>
<feature type="domain" description="GST C-terminal">
    <location>
        <begin position="87"/>
        <end position="215"/>
    </location>
</feature>
<feature type="domain" description="EF-1-gamma C-terminal" evidence="2">
    <location>
        <begin position="262"/>
        <end position="422"/>
    </location>
</feature>
<feature type="region of interest" description="Disordered" evidence="3">
    <location>
        <begin position="210"/>
        <end position="269"/>
    </location>
</feature>
<feature type="compositionally biased region" description="Basic and acidic residues" evidence="3">
    <location>
        <begin position="223"/>
        <end position="250"/>
    </location>
</feature>
<protein>
    <recommendedName>
        <fullName>Elongation factor 1-gamma</fullName>
        <shortName>EF-1-gamma</shortName>
    </recommendedName>
    <alternativeName>
        <fullName>eEF-1B gamma</fullName>
    </alternativeName>
</protein>
<organism>
    <name type="scientific">Prunus avium</name>
    <name type="common">Cherry</name>
    <name type="synonym">Cerasus avium</name>
    <dbReference type="NCBI Taxonomy" id="42229"/>
    <lineage>
        <taxon>Eukaryota</taxon>
        <taxon>Viridiplantae</taxon>
        <taxon>Streptophyta</taxon>
        <taxon>Embryophyta</taxon>
        <taxon>Tracheophyta</taxon>
        <taxon>Spermatophyta</taxon>
        <taxon>Magnoliopsida</taxon>
        <taxon>eudicotyledons</taxon>
        <taxon>Gunneridae</taxon>
        <taxon>Pentapetalae</taxon>
        <taxon>rosids</taxon>
        <taxon>fabids</taxon>
        <taxon>Rosales</taxon>
        <taxon>Rosaceae</taxon>
        <taxon>Amygdaloideae</taxon>
        <taxon>Amygdaleae</taxon>
        <taxon>Prunus</taxon>
    </lineage>
</organism>
<evidence type="ECO:0000250" key="1"/>
<evidence type="ECO:0000255" key="2">
    <source>
        <dbReference type="PROSITE-ProRule" id="PRU00519"/>
    </source>
</evidence>
<evidence type="ECO:0000256" key="3">
    <source>
        <dbReference type="SAM" id="MobiDB-lite"/>
    </source>
</evidence>
<name>EF1G_PRUAV</name>
<dbReference type="EMBL" id="AF297712">
    <property type="protein sequence ID" value="AAG17901.1"/>
    <property type="molecule type" value="mRNA"/>
</dbReference>
<dbReference type="SMR" id="Q9FUM1"/>
<dbReference type="Proteomes" id="UP000515124">
    <property type="component" value="Unplaced"/>
</dbReference>
<dbReference type="GO" id="GO:0004364">
    <property type="term" value="F:glutathione transferase activity"/>
    <property type="evidence" value="ECO:0007669"/>
    <property type="project" value="InterPro"/>
</dbReference>
<dbReference type="GO" id="GO:0003746">
    <property type="term" value="F:translation elongation factor activity"/>
    <property type="evidence" value="ECO:0007669"/>
    <property type="project" value="UniProtKB-KW"/>
</dbReference>
<dbReference type="CDD" id="cd03181">
    <property type="entry name" value="GST_C_EF1Bgamma_like"/>
    <property type="match status" value="1"/>
</dbReference>
<dbReference type="CDD" id="cd03044">
    <property type="entry name" value="GST_N_EF1Bgamma"/>
    <property type="match status" value="1"/>
</dbReference>
<dbReference type="FunFam" id="1.20.1050.10:FF:000006">
    <property type="entry name" value="Elongation factor 1 gamma"/>
    <property type="match status" value="1"/>
</dbReference>
<dbReference type="FunFam" id="3.30.70.1010:FF:000001">
    <property type="entry name" value="Elongation factor 1-gamma 1"/>
    <property type="match status" value="1"/>
</dbReference>
<dbReference type="FunFam" id="3.40.30.10:FF:000148">
    <property type="entry name" value="Elongation factor 1B gamma"/>
    <property type="match status" value="1"/>
</dbReference>
<dbReference type="Gene3D" id="1.20.1050.10">
    <property type="match status" value="1"/>
</dbReference>
<dbReference type="Gene3D" id="3.40.30.10">
    <property type="entry name" value="Glutaredoxin"/>
    <property type="match status" value="1"/>
</dbReference>
<dbReference type="Gene3D" id="3.30.70.1010">
    <property type="entry name" value="Translation elongation factor EF1B, gamma chain, conserved domain"/>
    <property type="match status" value="1"/>
</dbReference>
<dbReference type="InterPro" id="IPR044628">
    <property type="entry name" value="EF-1-gamma_plant"/>
</dbReference>
<dbReference type="InterPro" id="IPR001662">
    <property type="entry name" value="EF1B_G_C"/>
</dbReference>
<dbReference type="InterPro" id="IPR036433">
    <property type="entry name" value="EF1B_G_C_sf"/>
</dbReference>
<dbReference type="InterPro" id="IPR010987">
    <property type="entry name" value="Glutathione-S-Trfase_C-like"/>
</dbReference>
<dbReference type="InterPro" id="IPR036282">
    <property type="entry name" value="Glutathione-S-Trfase_C_sf"/>
</dbReference>
<dbReference type="InterPro" id="IPR040079">
    <property type="entry name" value="Glutathione_S-Trfase"/>
</dbReference>
<dbReference type="InterPro" id="IPR004045">
    <property type="entry name" value="Glutathione_S-Trfase_N"/>
</dbReference>
<dbReference type="InterPro" id="IPR004046">
    <property type="entry name" value="GST_C"/>
</dbReference>
<dbReference type="InterPro" id="IPR036249">
    <property type="entry name" value="Thioredoxin-like_sf"/>
</dbReference>
<dbReference type="PANTHER" id="PTHR44372">
    <property type="entry name" value="ELONGATION FACTOR 1-GAMMA 1-RELATED"/>
    <property type="match status" value="1"/>
</dbReference>
<dbReference type="PANTHER" id="PTHR44372:SF13">
    <property type="entry name" value="ELONGATION FACTOR 1-GAMMA 1-RELATED"/>
    <property type="match status" value="1"/>
</dbReference>
<dbReference type="Pfam" id="PF00647">
    <property type="entry name" value="EF1G"/>
    <property type="match status" value="1"/>
</dbReference>
<dbReference type="Pfam" id="PF00043">
    <property type="entry name" value="GST_C"/>
    <property type="match status" value="1"/>
</dbReference>
<dbReference type="Pfam" id="PF02798">
    <property type="entry name" value="GST_N"/>
    <property type="match status" value="1"/>
</dbReference>
<dbReference type="SFLD" id="SFLDS00019">
    <property type="entry name" value="Glutathione_Transferase_(cytos"/>
    <property type="match status" value="1"/>
</dbReference>
<dbReference type="SFLD" id="SFLDG00358">
    <property type="entry name" value="Main_(cytGST)"/>
    <property type="match status" value="1"/>
</dbReference>
<dbReference type="SMART" id="SM01183">
    <property type="entry name" value="EF1G"/>
    <property type="match status" value="1"/>
</dbReference>
<dbReference type="SUPFAM" id="SSF89942">
    <property type="entry name" value="eEF1-gamma domain"/>
    <property type="match status" value="1"/>
</dbReference>
<dbReference type="SUPFAM" id="SSF47616">
    <property type="entry name" value="GST C-terminal domain-like"/>
    <property type="match status" value="1"/>
</dbReference>
<dbReference type="SUPFAM" id="SSF52833">
    <property type="entry name" value="Thioredoxin-like"/>
    <property type="match status" value="1"/>
</dbReference>
<dbReference type="PROSITE" id="PS50040">
    <property type="entry name" value="EF1G_C"/>
    <property type="match status" value="1"/>
</dbReference>
<dbReference type="PROSITE" id="PS50405">
    <property type="entry name" value="GST_CTER"/>
    <property type="match status" value="1"/>
</dbReference>
<dbReference type="PROSITE" id="PS50404">
    <property type="entry name" value="GST_NTER"/>
    <property type="match status" value="1"/>
</dbReference>
<keyword id="KW-0251">Elongation factor</keyword>
<keyword id="KW-0648">Protein biosynthesis</keyword>
<keyword id="KW-1185">Reference proteome</keyword>
<sequence length="422" mass="47986">MALVLHAGKTNKNAFKTLIVAEYTGVKVELAPDFEMGVTNKTPEYLKLNPIGKVPLLETPDGPIFESNAIARYVARLKADNPLIGSSLIDYAHIEQWIDFGSLEIDANIISWFRPRFGYAVYLPPAEEAAISALKRALGALNTHLASNTYLVGHFVTLADIIVTCNLFFGFTKLMIKSFTSEFPHVERYFWTLVNQPKFKKVLGDVKQTESVPPVPSAKKPSQPKETKSKAKEEPKKEAKKEPAKPKAEAAEEVEEAPKPKPKNPLDLLPPSNMVLDDWKRLYSNTKTNFREVAIKGFWDMYDPEGYSLWFCEYKYNDENTVSFVTLNKVGGFLQRMDLARKYAFGKMLVIGSEPPFKVKGLWLFRGQEIPPFVMEECYDMELYNWTKVDLSDENQKERVNQVIEDQEPFEGEALLDAKCFK</sequence>
<accession>Q9FUM1</accession>
<comment type="function">
    <text evidence="1">Probably plays a role in anchoring the complex to other cellular components.</text>
</comment>
<comment type="subunit">
    <text evidence="1">EF-1 is composed of four subunits: alpha, beta, delta, and gamma.</text>
</comment>
<proteinExistence type="evidence at transcript level"/>
<reference key="1">
    <citation type="submission" date="2000-08" db="EMBL/GenBank/DDBJ databases">
        <title>A full length cDNA for translation elongation factor 1-gamma cloned from sweet cherry fruit.</title>
        <authorList>
            <person name="Wu Z."/>
            <person name="Wiersma P.A."/>
        </authorList>
    </citation>
    <scope>NUCLEOTIDE SEQUENCE [MRNA]</scope>
</reference>